<proteinExistence type="evidence at protein level"/>
<feature type="initiator methionine" description="Removed" evidence="2">
    <location>
        <position position="1"/>
    </location>
</feature>
<feature type="chain" id="PRO_0000158535" description="Acylphosphatase-1">
    <location>
        <begin position="2"/>
        <end position="99"/>
    </location>
</feature>
<feature type="domain" description="Acylphosphatase-like" evidence="1">
    <location>
        <begin position="9"/>
        <end position="99"/>
    </location>
</feature>
<feature type="active site" evidence="1">
    <location>
        <position position="24"/>
    </location>
</feature>
<feature type="active site" evidence="1">
    <location>
        <position position="42"/>
    </location>
</feature>
<feature type="modified residue" description="N-acetylalanine" evidence="2">
    <location>
        <position position="2"/>
    </location>
</feature>
<feature type="splice variant" id="VSP_045688" description="In isoform 2." evidence="3">
    <original>AEGKKLGLVGWVQNTDRGTVQGQLQGPISKVRHMQEWLETRGSPKSHIDKANFNNEKVILKLDYSDFQIVK</original>
    <variation>EMTVENRIAETHSKSCVPVSFATSYAG</variation>
    <location>
        <begin position="29"/>
        <end position="99"/>
    </location>
</feature>
<feature type="strand" evidence="7">
    <location>
        <begin position="7"/>
        <end position="17"/>
    </location>
</feature>
<feature type="strand" evidence="7">
    <location>
        <begin position="19"/>
        <end position="22"/>
    </location>
</feature>
<feature type="helix" evidence="7">
    <location>
        <begin position="23"/>
        <end position="33"/>
    </location>
</feature>
<feature type="strand" evidence="7">
    <location>
        <begin position="37"/>
        <end position="42"/>
    </location>
</feature>
<feature type="strand" evidence="6">
    <location>
        <begin position="44"/>
        <end position="46"/>
    </location>
</feature>
<feature type="strand" evidence="7">
    <location>
        <begin position="48"/>
        <end position="55"/>
    </location>
</feature>
<feature type="helix" evidence="7">
    <location>
        <begin position="56"/>
        <end position="68"/>
    </location>
</feature>
<feature type="strand" evidence="6">
    <location>
        <begin position="72"/>
        <end position="74"/>
    </location>
</feature>
<feature type="strand" evidence="7">
    <location>
        <begin position="75"/>
        <end position="89"/>
    </location>
</feature>
<feature type="strand" evidence="7">
    <location>
        <begin position="93"/>
        <end position="98"/>
    </location>
</feature>
<name>ACYP1_HUMAN</name>
<organism>
    <name type="scientific">Homo sapiens</name>
    <name type="common">Human</name>
    <dbReference type="NCBI Taxonomy" id="9606"/>
    <lineage>
        <taxon>Eukaryota</taxon>
        <taxon>Metazoa</taxon>
        <taxon>Chordata</taxon>
        <taxon>Craniata</taxon>
        <taxon>Vertebrata</taxon>
        <taxon>Euteleostomi</taxon>
        <taxon>Mammalia</taxon>
        <taxon>Eutheria</taxon>
        <taxon>Euarchontoglires</taxon>
        <taxon>Primates</taxon>
        <taxon>Haplorrhini</taxon>
        <taxon>Catarrhini</taxon>
        <taxon>Hominidae</taxon>
        <taxon>Homo</taxon>
    </lineage>
</organism>
<evidence type="ECO:0000255" key="1">
    <source>
        <dbReference type="PROSITE-ProRule" id="PRU00520"/>
    </source>
</evidence>
<evidence type="ECO:0000269" key="2">
    <source>
    </source>
</evidence>
<evidence type="ECO:0000303" key="3">
    <source>
    </source>
</evidence>
<evidence type="ECO:0000305" key="4"/>
<evidence type="ECO:0000305" key="5">
    <source>
    </source>
</evidence>
<evidence type="ECO:0007829" key="6">
    <source>
        <dbReference type="PDB" id="2K7J"/>
    </source>
</evidence>
<evidence type="ECO:0007829" key="7">
    <source>
        <dbReference type="PDB" id="6CBU"/>
    </source>
</evidence>
<sequence length="99" mass="11261">MAEGNTLISVDYEIFGKVQGVFFRKHTQAEGKKLGLVGWVQNTDRGTVQGQLQGPISKVRHMQEWLETRGSPKSHIDKANFNNEKVILKLDYSDFQIVK</sequence>
<keyword id="KW-0002">3D-structure</keyword>
<keyword id="KW-0007">Acetylation</keyword>
<keyword id="KW-0025">Alternative splicing</keyword>
<keyword id="KW-0903">Direct protein sequencing</keyword>
<keyword id="KW-0378">Hydrolase</keyword>
<keyword id="KW-1267">Proteomics identification</keyword>
<keyword id="KW-1185">Reference proteome</keyword>
<reference key="1">
    <citation type="submission" date="1997-02" db="EMBL/GenBank/DDBJ databases">
        <authorList>
            <person name="Raugei G."/>
        </authorList>
    </citation>
    <scope>NUCLEOTIDE SEQUENCE [MRNA] (ISOFORM 1)</scope>
    <source>
        <tissue>Placenta</tissue>
    </source>
</reference>
<reference key="2">
    <citation type="journal article" date="2004" name="Nat. Genet.">
        <title>Complete sequencing and characterization of 21,243 full-length human cDNAs.</title>
        <authorList>
            <person name="Ota T."/>
            <person name="Suzuki Y."/>
            <person name="Nishikawa T."/>
            <person name="Otsuki T."/>
            <person name="Sugiyama T."/>
            <person name="Irie R."/>
            <person name="Wakamatsu A."/>
            <person name="Hayashi K."/>
            <person name="Sato H."/>
            <person name="Nagai K."/>
            <person name="Kimura K."/>
            <person name="Makita H."/>
            <person name="Sekine M."/>
            <person name="Obayashi M."/>
            <person name="Nishi T."/>
            <person name="Shibahara T."/>
            <person name="Tanaka T."/>
            <person name="Ishii S."/>
            <person name="Yamamoto J."/>
            <person name="Saito K."/>
            <person name="Kawai Y."/>
            <person name="Isono Y."/>
            <person name="Nakamura Y."/>
            <person name="Nagahari K."/>
            <person name="Murakami K."/>
            <person name="Yasuda T."/>
            <person name="Iwayanagi T."/>
            <person name="Wagatsuma M."/>
            <person name="Shiratori A."/>
            <person name="Sudo H."/>
            <person name="Hosoiri T."/>
            <person name="Kaku Y."/>
            <person name="Kodaira H."/>
            <person name="Kondo H."/>
            <person name="Sugawara M."/>
            <person name="Takahashi M."/>
            <person name="Kanda K."/>
            <person name="Yokoi T."/>
            <person name="Furuya T."/>
            <person name="Kikkawa E."/>
            <person name="Omura Y."/>
            <person name="Abe K."/>
            <person name="Kamihara K."/>
            <person name="Katsuta N."/>
            <person name="Sato K."/>
            <person name="Tanikawa M."/>
            <person name="Yamazaki M."/>
            <person name="Ninomiya K."/>
            <person name="Ishibashi T."/>
            <person name="Yamashita H."/>
            <person name="Murakawa K."/>
            <person name="Fujimori K."/>
            <person name="Tanai H."/>
            <person name="Kimata M."/>
            <person name="Watanabe M."/>
            <person name="Hiraoka S."/>
            <person name="Chiba Y."/>
            <person name="Ishida S."/>
            <person name="Ono Y."/>
            <person name="Takiguchi S."/>
            <person name="Watanabe S."/>
            <person name="Yosida M."/>
            <person name="Hotuta T."/>
            <person name="Kusano J."/>
            <person name="Kanehori K."/>
            <person name="Takahashi-Fujii A."/>
            <person name="Hara H."/>
            <person name="Tanase T.-O."/>
            <person name="Nomura Y."/>
            <person name="Togiya S."/>
            <person name="Komai F."/>
            <person name="Hara R."/>
            <person name="Takeuchi K."/>
            <person name="Arita M."/>
            <person name="Imose N."/>
            <person name="Musashino K."/>
            <person name="Yuuki H."/>
            <person name="Oshima A."/>
            <person name="Sasaki N."/>
            <person name="Aotsuka S."/>
            <person name="Yoshikawa Y."/>
            <person name="Matsunawa H."/>
            <person name="Ichihara T."/>
            <person name="Shiohata N."/>
            <person name="Sano S."/>
            <person name="Moriya S."/>
            <person name="Momiyama H."/>
            <person name="Satoh N."/>
            <person name="Takami S."/>
            <person name="Terashima Y."/>
            <person name="Suzuki O."/>
            <person name="Nakagawa S."/>
            <person name="Senoh A."/>
            <person name="Mizoguchi H."/>
            <person name="Goto Y."/>
            <person name="Shimizu F."/>
            <person name="Wakebe H."/>
            <person name="Hishigaki H."/>
            <person name="Watanabe T."/>
            <person name="Sugiyama A."/>
            <person name="Takemoto M."/>
            <person name="Kawakami B."/>
            <person name="Yamazaki M."/>
            <person name="Watanabe K."/>
            <person name="Kumagai A."/>
            <person name="Itakura S."/>
            <person name="Fukuzumi Y."/>
            <person name="Fujimori Y."/>
            <person name="Komiyama M."/>
            <person name="Tashiro H."/>
            <person name="Tanigami A."/>
            <person name="Fujiwara T."/>
            <person name="Ono T."/>
            <person name="Yamada K."/>
            <person name="Fujii Y."/>
            <person name="Ozaki K."/>
            <person name="Hirao M."/>
            <person name="Ohmori Y."/>
            <person name="Kawabata A."/>
            <person name="Hikiji T."/>
            <person name="Kobatake N."/>
            <person name="Inagaki H."/>
            <person name="Ikema Y."/>
            <person name="Okamoto S."/>
            <person name="Okitani R."/>
            <person name="Kawakami T."/>
            <person name="Noguchi S."/>
            <person name="Itoh T."/>
            <person name="Shigeta K."/>
            <person name="Senba T."/>
            <person name="Matsumura K."/>
            <person name="Nakajima Y."/>
            <person name="Mizuno T."/>
            <person name="Morinaga M."/>
            <person name="Sasaki M."/>
            <person name="Togashi T."/>
            <person name="Oyama M."/>
            <person name="Hata H."/>
            <person name="Watanabe M."/>
            <person name="Komatsu T."/>
            <person name="Mizushima-Sugano J."/>
            <person name="Satoh T."/>
            <person name="Shirai Y."/>
            <person name="Takahashi Y."/>
            <person name="Nakagawa K."/>
            <person name="Okumura K."/>
            <person name="Nagase T."/>
            <person name="Nomura N."/>
            <person name="Kikuchi H."/>
            <person name="Masuho Y."/>
            <person name="Yamashita R."/>
            <person name="Nakai K."/>
            <person name="Yada T."/>
            <person name="Nakamura Y."/>
            <person name="Ohara O."/>
            <person name="Isogai T."/>
            <person name="Sugano S."/>
        </authorList>
    </citation>
    <scope>NUCLEOTIDE SEQUENCE [LARGE SCALE MRNA] (ISOFORM 1)</scope>
    <source>
        <tissue>Testis</tissue>
    </source>
</reference>
<reference key="3">
    <citation type="journal article" date="2003" name="Nature">
        <title>The DNA sequence and analysis of human chromosome 14.</title>
        <authorList>
            <person name="Heilig R."/>
            <person name="Eckenberg R."/>
            <person name="Petit J.-L."/>
            <person name="Fonknechten N."/>
            <person name="Da Silva C."/>
            <person name="Cattolico L."/>
            <person name="Levy M."/>
            <person name="Barbe V."/>
            <person name="De Berardinis V."/>
            <person name="Ureta-Vidal A."/>
            <person name="Pelletier E."/>
            <person name="Vico V."/>
            <person name="Anthouard V."/>
            <person name="Rowen L."/>
            <person name="Madan A."/>
            <person name="Qin S."/>
            <person name="Sun H."/>
            <person name="Du H."/>
            <person name="Pepin K."/>
            <person name="Artiguenave F."/>
            <person name="Robert C."/>
            <person name="Cruaud C."/>
            <person name="Bruels T."/>
            <person name="Jaillon O."/>
            <person name="Friedlander L."/>
            <person name="Samson G."/>
            <person name="Brottier P."/>
            <person name="Cure S."/>
            <person name="Segurens B."/>
            <person name="Aniere F."/>
            <person name="Samain S."/>
            <person name="Crespeau H."/>
            <person name="Abbasi N."/>
            <person name="Aiach N."/>
            <person name="Boscus D."/>
            <person name="Dickhoff R."/>
            <person name="Dors M."/>
            <person name="Dubois I."/>
            <person name="Friedman C."/>
            <person name="Gouyvenoux M."/>
            <person name="James R."/>
            <person name="Madan A."/>
            <person name="Mairey-Estrada B."/>
            <person name="Mangenot S."/>
            <person name="Martins N."/>
            <person name="Menard M."/>
            <person name="Oztas S."/>
            <person name="Ratcliffe A."/>
            <person name="Shaffer T."/>
            <person name="Trask B."/>
            <person name="Vacherie B."/>
            <person name="Bellemere C."/>
            <person name="Belser C."/>
            <person name="Besnard-Gonnet M."/>
            <person name="Bartol-Mavel D."/>
            <person name="Boutard M."/>
            <person name="Briez-Silla S."/>
            <person name="Combette S."/>
            <person name="Dufosse-Laurent V."/>
            <person name="Ferron C."/>
            <person name="Lechaplais C."/>
            <person name="Louesse C."/>
            <person name="Muselet D."/>
            <person name="Magdelenat G."/>
            <person name="Pateau E."/>
            <person name="Petit E."/>
            <person name="Sirvain-Trukniewicz P."/>
            <person name="Trybou A."/>
            <person name="Vega-Czarny N."/>
            <person name="Bataille E."/>
            <person name="Bluet E."/>
            <person name="Bordelais I."/>
            <person name="Dubois M."/>
            <person name="Dumont C."/>
            <person name="Guerin T."/>
            <person name="Haffray S."/>
            <person name="Hammadi R."/>
            <person name="Muanga J."/>
            <person name="Pellouin V."/>
            <person name="Robert D."/>
            <person name="Wunderle E."/>
            <person name="Gauguet G."/>
            <person name="Roy A."/>
            <person name="Sainte-Marthe L."/>
            <person name="Verdier J."/>
            <person name="Verdier-Discala C."/>
            <person name="Hillier L.W."/>
            <person name="Fulton L."/>
            <person name="McPherson J."/>
            <person name="Matsuda F."/>
            <person name="Wilson R."/>
            <person name="Scarpelli C."/>
            <person name="Gyapay G."/>
            <person name="Wincker P."/>
            <person name="Saurin W."/>
            <person name="Quetier F."/>
            <person name="Waterston R."/>
            <person name="Hood L."/>
            <person name="Weissenbach J."/>
        </authorList>
    </citation>
    <scope>NUCLEOTIDE SEQUENCE [LARGE SCALE GENOMIC DNA]</scope>
</reference>
<reference key="4">
    <citation type="submission" date="2005-07" db="EMBL/GenBank/DDBJ databases">
        <authorList>
            <person name="Mural R.J."/>
            <person name="Istrail S."/>
            <person name="Sutton G.G."/>
            <person name="Florea L."/>
            <person name="Halpern A.L."/>
            <person name="Mobarry C.M."/>
            <person name="Lippert R."/>
            <person name="Walenz B."/>
            <person name="Shatkay H."/>
            <person name="Dew I."/>
            <person name="Miller J.R."/>
            <person name="Flanigan M.J."/>
            <person name="Edwards N.J."/>
            <person name="Bolanos R."/>
            <person name="Fasulo D."/>
            <person name="Halldorsson B.V."/>
            <person name="Hannenhalli S."/>
            <person name="Turner R."/>
            <person name="Yooseph S."/>
            <person name="Lu F."/>
            <person name="Nusskern D.R."/>
            <person name="Shue B.C."/>
            <person name="Zheng X.H."/>
            <person name="Zhong F."/>
            <person name="Delcher A.L."/>
            <person name="Huson D.H."/>
            <person name="Kravitz S.A."/>
            <person name="Mouchard L."/>
            <person name="Reinert K."/>
            <person name="Remington K.A."/>
            <person name="Clark A.G."/>
            <person name="Waterman M.S."/>
            <person name="Eichler E.E."/>
            <person name="Adams M.D."/>
            <person name="Hunkapiller M.W."/>
            <person name="Myers E.W."/>
            <person name="Venter J.C."/>
        </authorList>
    </citation>
    <scope>NUCLEOTIDE SEQUENCE [LARGE SCALE GENOMIC DNA]</scope>
</reference>
<reference key="5">
    <citation type="journal article" date="2004" name="Genome Res.">
        <title>The status, quality, and expansion of the NIH full-length cDNA project: the Mammalian Gene Collection (MGC).</title>
        <authorList>
            <consortium name="The MGC Project Team"/>
        </authorList>
    </citation>
    <scope>NUCLEOTIDE SEQUENCE [LARGE SCALE MRNA] (ISOFORMS 1 AND 2)</scope>
    <source>
        <tissue>Embryonic carcinoma</tissue>
        <tissue>Mammary gland</tissue>
    </source>
</reference>
<reference key="6">
    <citation type="journal article" date="1986" name="Biochemistry">
        <title>A new acylphosphatase isoenzyme from human erythrocytes: purification, characterization, and primary structure.</title>
        <authorList>
            <person name="Liguri G."/>
            <person name="Camici G."/>
            <person name="Manao G."/>
            <person name="Cappugi G."/>
            <person name="Nassi P."/>
            <person name="Modesti A."/>
            <person name="Ramponi G."/>
        </authorList>
    </citation>
    <scope>PROTEIN SEQUENCE OF 2-99</scope>
    <scope>CATALYTIC ACTIVITY</scope>
    <scope>CLEAVAGE OF INITIATOR METHIONINE</scope>
    <scope>ACETYLATION AT ALA-2</scope>
</reference>
<reference key="7">
    <citation type="journal article" date="1995" name="FEBS Lett.">
        <title>Cloning and expression of the cDNA coding for the erythrocyte isoenzyme of human acylphosphatase.</title>
        <authorList>
            <person name="Fiaschi T."/>
            <person name="Raugei G."/>
            <person name="Marzocchini R."/>
            <person name="Chiarugi P."/>
            <person name="Cirri P."/>
            <person name="Ramponi G."/>
        </authorList>
    </citation>
    <scope>PRELIMINARY NUCLEOTIDE SEQUENCE [MRNA] OF 10-86</scope>
    <source>
        <tissue>Placenta</tissue>
    </source>
</reference>
<reference key="8">
    <citation type="journal article" date="2011" name="BMC Syst. Biol.">
        <title>Initial characterization of the human central proteome.</title>
        <authorList>
            <person name="Burkard T.R."/>
            <person name="Planyavsky M."/>
            <person name="Kaupe I."/>
            <person name="Breitwieser F.P."/>
            <person name="Buerckstuemmer T."/>
            <person name="Bennett K.L."/>
            <person name="Superti-Furga G."/>
            <person name="Colinge J."/>
        </authorList>
    </citation>
    <scope>IDENTIFICATION BY MASS SPECTROMETRY [LARGE SCALE ANALYSIS]</scope>
</reference>
<reference key="9">
    <citation type="journal article" date="2006" name="Acta Crystallogr. F">
        <title>Crystallization and preliminary crystallographic analysis of human common-type acylphosphatase.</title>
        <authorList>
            <person name="Yeung R.C."/>
            <person name="Lam S.Y."/>
            <person name="Wong K.B."/>
        </authorList>
    </citation>
    <scope>X-RAY CRYSTALLOGRAPHY (1.45 ANGSTROMS)</scope>
</reference>
<reference key="10">
    <citation type="journal article" date="2009" name="Proc. Natl. Acad. Sci. U.S.A.">
        <title>Rational stabilization of enzymes by computational redesign of surface charge-charge interactions.</title>
        <authorList>
            <person name="Gribenko A.V."/>
            <person name="Patel M.M."/>
            <person name="Liu J."/>
            <person name="McCallum S.A."/>
            <person name="Wang C."/>
            <person name="Makhatadze G.I."/>
        </authorList>
    </citation>
    <scope>STRUCTURE BY NMR OF 2-99</scope>
</reference>
<comment type="catalytic activity">
    <reaction evidence="5">
        <text>an acyl phosphate + H2O = a carboxylate + phosphate + H(+)</text>
        <dbReference type="Rhea" id="RHEA:14965"/>
        <dbReference type="ChEBI" id="CHEBI:15377"/>
        <dbReference type="ChEBI" id="CHEBI:15378"/>
        <dbReference type="ChEBI" id="CHEBI:29067"/>
        <dbReference type="ChEBI" id="CHEBI:43474"/>
        <dbReference type="ChEBI" id="CHEBI:59918"/>
        <dbReference type="EC" id="3.6.1.7"/>
    </reaction>
</comment>
<comment type="alternative products">
    <event type="alternative splicing"/>
    <isoform>
        <id>P07311-1</id>
        <name>1</name>
        <sequence type="displayed"/>
    </isoform>
    <isoform>
        <id>P07311-2</id>
        <name>2</name>
        <sequence type="described" ref="VSP_045688"/>
    </isoform>
</comment>
<comment type="tissue specificity">
    <text>Organ-common type isozyme is found in many different tissues.</text>
</comment>
<comment type="similarity">
    <text evidence="4">Belongs to the acylphosphatase family.</text>
</comment>
<gene>
    <name type="primary">ACYP1</name>
    <name type="synonym">ACYPE</name>
</gene>
<accession>P07311</accession>
<accession>A6NDV8</accession>
<accession>B2R590</accession>
<dbReference type="EC" id="3.6.1.7" evidence="5"/>
<dbReference type="EMBL" id="X84194">
    <property type="protein sequence ID" value="CAA58987.1"/>
    <property type="molecule type" value="mRNA"/>
</dbReference>
<dbReference type="EMBL" id="AK312101">
    <property type="protein sequence ID" value="BAG35037.1"/>
    <property type="molecule type" value="mRNA"/>
</dbReference>
<dbReference type="EMBL" id="AC007055">
    <property type="protein sequence ID" value="AAD31937.1"/>
    <property type="molecule type" value="Genomic_DNA"/>
</dbReference>
<dbReference type="EMBL" id="AL049780">
    <property type="status" value="NOT_ANNOTATED_CDS"/>
    <property type="molecule type" value="Genomic_DNA"/>
</dbReference>
<dbReference type="EMBL" id="CH471061">
    <property type="protein sequence ID" value="EAW81216.1"/>
    <property type="molecule type" value="Genomic_DNA"/>
</dbReference>
<dbReference type="EMBL" id="BC035568">
    <property type="protein sequence ID" value="AAH35568.1"/>
    <property type="molecule type" value="mRNA"/>
</dbReference>
<dbReference type="EMBL" id="BG614847">
    <property type="status" value="NOT_ANNOTATED_CDS"/>
    <property type="molecule type" value="mRNA"/>
</dbReference>
<dbReference type="CCDS" id="CCDS9838.1">
    <molecule id="P07311-1"/>
</dbReference>
<dbReference type="PIR" id="S66187">
    <property type="entry name" value="QPHUE"/>
</dbReference>
<dbReference type="RefSeq" id="NP_001098.1">
    <molecule id="P07311-1"/>
    <property type="nucleotide sequence ID" value="NM_001107.5"/>
</dbReference>
<dbReference type="RefSeq" id="NP_001289545.1">
    <molecule id="P07311-1"/>
    <property type="nucleotide sequence ID" value="NM_001302616.2"/>
</dbReference>
<dbReference type="PDB" id="2K7J">
    <property type="method" value="NMR"/>
    <property type="chains" value="A=2-99"/>
</dbReference>
<dbReference type="PDB" id="2K7K">
    <property type="method" value="NMR"/>
    <property type="chains" value="A=2-99"/>
</dbReference>
<dbReference type="PDB" id="2VH7">
    <property type="method" value="X-ray"/>
    <property type="resolution" value="1.45 A"/>
    <property type="chains" value="A=1-99"/>
</dbReference>
<dbReference type="PDB" id="2W4C">
    <property type="method" value="X-ray"/>
    <property type="resolution" value="1.52 A"/>
    <property type="chains" value="A=1-99"/>
</dbReference>
<dbReference type="PDB" id="2W4P">
    <property type="method" value="X-ray"/>
    <property type="resolution" value="1.70 A"/>
    <property type="chains" value="A=1-99"/>
</dbReference>
<dbReference type="PDB" id="3TOQ">
    <property type="method" value="X-ray"/>
    <property type="resolution" value="2.00 A"/>
    <property type="chains" value="A=1-99"/>
</dbReference>
<dbReference type="PDB" id="6CBU">
    <property type="method" value="X-ray"/>
    <property type="resolution" value="1.20 A"/>
    <property type="chains" value="A=1-98"/>
</dbReference>
<dbReference type="PDBsum" id="2K7J"/>
<dbReference type="PDBsum" id="2K7K"/>
<dbReference type="PDBsum" id="2VH7"/>
<dbReference type="PDBsum" id="2W4C"/>
<dbReference type="PDBsum" id="2W4P"/>
<dbReference type="PDBsum" id="3TOQ"/>
<dbReference type="PDBsum" id="6CBU"/>
<dbReference type="SMR" id="P07311"/>
<dbReference type="BioGRID" id="106612">
    <property type="interactions" value="7"/>
</dbReference>
<dbReference type="FunCoup" id="P07311">
    <property type="interactions" value="112"/>
</dbReference>
<dbReference type="IntAct" id="P07311">
    <property type="interactions" value="1"/>
</dbReference>
<dbReference type="STRING" id="9606.ENSP00000450873"/>
<dbReference type="iPTMnet" id="P07311"/>
<dbReference type="PhosphoSitePlus" id="P07311"/>
<dbReference type="BioMuta" id="ACYP1"/>
<dbReference type="jPOST" id="P07311"/>
<dbReference type="MassIVE" id="P07311"/>
<dbReference type="PaxDb" id="9606-ENSP00000238618"/>
<dbReference type="PeptideAtlas" id="P07311"/>
<dbReference type="ProteomicsDB" id="51984">
    <molecule id="P07311-1"/>
</dbReference>
<dbReference type="ProteomicsDB" id="934"/>
<dbReference type="Pumba" id="P07311"/>
<dbReference type="TopDownProteomics" id="P07311-1">
    <molecule id="P07311-1"/>
</dbReference>
<dbReference type="Antibodypedia" id="25782">
    <property type="antibodies" value="194 antibodies from 30 providers"/>
</dbReference>
<dbReference type="DNASU" id="97"/>
<dbReference type="Ensembl" id="ENST00000238618.8">
    <molecule id="P07311-1"/>
    <property type="protein sequence ID" value="ENSP00000238618.3"/>
    <property type="gene ID" value="ENSG00000119640.9"/>
</dbReference>
<dbReference type="Ensembl" id="ENST00000357971.7">
    <molecule id="P07311-2"/>
    <property type="protein sequence ID" value="ENSP00000350655.3"/>
    <property type="gene ID" value="ENSG00000119640.9"/>
</dbReference>
<dbReference type="Ensembl" id="ENST00000555694.5">
    <molecule id="P07311-1"/>
    <property type="protein sequence ID" value="ENSP00000451581.1"/>
    <property type="gene ID" value="ENSG00000119640.9"/>
</dbReference>
<dbReference type="GeneID" id="97"/>
<dbReference type="KEGG" id="hsa:97"/>
<dbReference type="MANE-Select" id="ENST00000238618.8">
    <property type="protein sequence ID" value="ENSP00000238618.3"/>
    <property type="RefSeq nucleotide sequence ID" value="NM_001107.5"/>
    <property type="RefSeq protein sequence ID" value="NP_001098.1"/>
</dbReference>
<dbReference type="UCSC" id="uc001xrf.4">
    <molecule id="P07311-1"/>
    <property type="organism name" value="human"/>
</dbReference>
<dbReference type="AGR" id="HGNC:179"/>
<dbReference type="CTD" id="97"/>
<dbReference type="DisGeNET" id="97"/>
<dbReference type="GeneCards" id="ACYP1"/>
<dbReference type="HGNC" id="HGNC:179">
    <property type="gene designation" value="ACYP1"/>
</dbReference>
<dbReference type="HPA" id="ENSG00000119640">
    <property type="expression patterns" value="Low tissue specificity"/>
</dbReference>
<dbReference type="MIM" id="600875">
    <property type="type" value="gene"/>
</dbReference>
<dbReference type="neXtProt" id="NX_P07311"/>
<dbReference type="OpenTargets" id="ENSG00000119640"/>
<dbReference type="PharmGKB" id="PA24499"/>
<dbReference type="VEuPathDB" id="HostDB:ENSG00000119640"/>
<dbReference type="eggNOG" id="KOG3360">
    <property type="taxonomic scope" value="Eukaryota"/>
</dbReference>
<dbReference type="GeneTree" id="ENSGT00940000166472"/>
<dbReference type="HOGENOM" id="CLU_141932_0_1_1"/>
<dbReference type="InParanoid" id="P07311"/>
<dbReference type="OMA" id="WVRNTSH"/>
<dbReference type="OrthoDB" id="7961613at2759"/>
<dbReference type="PAN-GO" id="P07311">
    <property type="GO annotations" value="1 GO annotation based on evolutionary models"/>
</dbReference>
<dbReference type="PhylomeDB" id="P07311"/>
<dbReference type="TreeFam" id="TF300288"/>
<dbReference type="PathwayCommons" id="P07311"/>
<dbReference type="SABIO-RK" id="P07311"/>
<dbReference type="SignaLink" id="P07311"/>
<dbReference type="BioGRID-ORCS" id="97">
    <property type="hits" value="8 hits in 1158 CRISPR screens"/>
</dbReference>
<dbReference type="ChiTaRS" id="ACYP1">
    <property type="organism name" value="human"/>
</dbReference>
<dbReference type="EvolutionaryTrace" id="P07311"/>
<dbReference type="GeneWiki" id="ACYP1"/>
<dbReference type="GenomeRNAi" id="97"/>
<dbReference type="Pharos" id="P07311">
    <property type="development level" value="Tbio"/>
</dbReference>
<dbReference type="PRO" id="PR:P07311"/>
<dbReference type="Proteomes" id="UP000005640">
    <property type="component" value="Chromosome 14"/>
</dbReference>
<dbReference type="RNAct" id="P07311">
    <property type="molecule type" value="protein"/>
</dbReference>
<dbReference type="Bgee" id="ENSG00000119640">
    <property type="expression patterns" value="Expressed in right uterine tube and 191 other cell types or tissues"/>
</dbReference>
<dbReference type="ExpressionAtlas" id="P07311">
    <property type="expression patterns" value="baseline and differential"/>
</dbReference>
<dbReference type="GO" id="GO:0003998">
    <property type="term" value="F:acylphosphatase activity"/>
    <property type="evidence" value="ECO:0000318"/>
    <property type="project" value="GO_Central"/>
</dbReference>
<dbReference type="GO" id="GO:0006796">
    <property type="term" value="P:phosphate-containing compound metabolic process"/>
    <property type="evidence" value="ECO:0000304"/>
    <property type="project" value="ProtInc"/>
</dbReference>
<dbReference type="FunFam" id="3.30.70.100:FF:000011">
    <property type="entry name" value="Acylphosphatase"/>
    <property type="match status" value="1"/>
</dbReference>
<dbReference type="Gene3D" id="3.30.70.100">
    <property type="match status" value="1"/>
</dbReference>
<dbReference type="InterPro" id="IPR020456">
    <property type="entry name" value="Acylphosphatase"/>
</dbReference>
<dbReference type="InterPro" id="IPR001792">
    <property type="entry name" value="Acylphosphatase-like_dom"/>
</dbReference>
<dbReference type="InterPro" id="IPR036046">
    <property type="entry name" value="Acylphosphatase-like_dom_sf"/>
</dbReference>
<dbReference type="InterPro" id="IPR017968">
    <property type="entry name" value="Acylphosphatase_CS"/>
</dbReference>
<dbReference type="PANTHER" id="PTHR10029">
    <property type="entry name" value="ACYLPHOSPHATASE"/>
    <property type="match status" value="1"/>
</dbReference>
<dbReference type="PANTHER" id="PTHR10029:SF21">
    <property type="entry name" value="ACYLPHOSPHATASE-1"/>
    <property type="match status" value="1"/>
</dbReference>
<dbReference type="Pfam" id="PF00708">
    <property type="entry name" value="Acylphosphatase"/>
    <property type="match status" value="1"/>
</dbReference>
<dbReference type="PRINTS" id="PR00112">
    <property type="entry name" value="ACYLPHPHTASE"/>
</dbReference>
<dbReference type="SUPFAM" id="SSF54975">
    <property type="entry name" value="Acylphosphatase/BLUF domain-like"/>
    <property type="match status" value="1"/>
</dbReference>
<dbReference type="PROSITE" id="PS00150">
    <property type="entry name" value="ACYLPHOSPHATASE_1"/>
    <property type="match status" value="1"/>
</dbReference>
<dbReference type="PROSITE" id="PS00151">
    <property type="entry name" value="ACYLPHOSPHATASE_2"/>
    <property type="match status" value="1"/>
</dbReference>
<dbReference type="PROSITE" id="PS51160">
    <property type="entry name" value="ACYLPHOSPHATASE_3"/>
    <property type="match status" value="1"/>
</dbReference>
<protein>
    <recommendedName>
        <fullName>Acylphosphatase-1</fullName>
        <ecNumber evidence="5">3.6.1.7</ecNumber>
    </recommendedName>
    <alternativeName>
        <fullName>Acylphosphatase, erythrocyte isozyme</fullName>
    </alternativeName>
    <alternativeName>
        <fullName>Acylphosphatase, organ-common type isozyme</fullName>
    </alternativeName>
    <alternativeName>
        <fullName>Acylphosphate phosphohydrolase 1</fullName>
    </alternativeName>
</protein>